<protein>
    <recommendedName>
        <fullName evidence="1">Nucleoside diphosphate kinase</fullName>
        <shortName evidence="1">NDK</shortName>
        <shortName evidence="1">NDP kinase</shortName>
        <ecNumber evidence="1">2.7.4.6</ecNumber>
    </recommendedName>
    <alternativeName>
        <fullName evidence="1">Nucleoside-2-P kinase</fullName>
    </alternativeName>
</protein>
<evidence type="ECO:0000255" key="1">
    <source>
        <dbReference type="HAMAP-Rule" id="MF_00451"/>
    </source>
</evidence>
<gene>
    <name evidence="1" type="primary">ndk</name>
    <name type="ordered locus">SO_2274</name>
</gene>
<proteinExistence type="inferred from homology"/>
<name>NDK_SHEON</name>
<accession>Q8EEU0</accession>
<sequence length="143" mass="15483">MAIERTFSIIKPDAVAKNHIGAIYNRFETAGLKIVAAKMLHLTKEQAEGFYAEHSERGFFGALVAFMTSGPIMVQVLEGENAVLAHREILGATNPAQAAPGTIRADFAQSIDENAAHGSDSLASAEREIAYFFSAEELCPRTR</sequence>
<keyword id="KW-0067">ATP-binding</keyword>
<keyword id="KW-0963">Cytoplasm</keyword>
<keyword id="KW-0418">Kinase</keyword>
<keyword id="KW-0460">Magnesium</keyword>
<keyword id="KW-0479">Metal-binding</keyword>
<keyword id="KW-0546">Nucleotide metabolism</keyword>
<keyword id="KW-0547">Nucleotide-binding</keyword>
<keyword id="KW-0597">Phosphoprotein</keyword>
<keyword id="KW-1185">Reference proteome</keyword>
<keyword id="KW-0808">Transferase</keyword>
<organism>
    <name type="scientific">Shewanella oneidensis (strain ATCC 700550 / JCM 31522 / CIP 106686 / LMG 19005 / NCIMB 14063 / MR-1)</name>
    <dbReference type="NCBI Taxonomy" id="211586"/>
    <lineage>
        <taxon>Bacteria</taxon>
        <taxon>Pseudomonadati</taxon>
        <taxon>Pseudomonadota</taxon>
        <taxon>Gammaproteobacteria</taxon>
        <taxon>Alteromonadales</taxon>
        <taxon>Shewanellaceae</taxon>
        <taxon>Shewanella</taxon>
    </lineage>
</organism>
<reference key="1">
    <citation type="journal article" date="2002" name="Nat. Biotechnol.">
        <title>Genome sequence of the dissimilatory metal ion-reducing bacterium Shewanella oneidensis.</title>
        <authorList>
            <person name="Heidelberg J.F."/>
            <person name="Paulsen I.T."/>
            <person name="Nelson K.E."/>
            <person name="Gaidos E.J."/>
            <person name="Nelson W.C."/>
            <person name="Read T.D."/>
            <person name="Eisen J.A."/>
            <person name="Seshadri R."/>
            <person name="Ward N.L."/>
            <person name="Methe B.A."/>
            <person name="Clayton R.A."/>
            <person name="Meyer T."/>
            <person name="Tsapin A."/>
            <person name="Scott J."/>
            <person name="Beanan M.J."/>
            <person name="Brinkac L.M."/>
            <person name="Daugherty S.C."/>
            <person name="DeBoy R.T."/>
            <person name="Dodson R.J."/>
            <person name="Durkin A.S."/>
            <person name="Haft D.H."/>
            <person name="Kolonay J.F."/>
            <person name="Madupu R."/>
            <person name="Peterson J.D."/>
            <person name="Umayam L.A."/>
            <person name="White O."/>
            <person name="Wolf A.M."/>
            <person name="Vamathevan J.J."/>
            <person name="Weidman J.F."/>
            <person name="Impraim M."/>
            <person name="Lee K."/>
            <person name="Berry K.J."/>
            <person name="Lee C."/>
            <person name="Mueller J."/>
            <person name="Khouri H.M."/>
            <person name="Gill J."/>
            <person name="Utterback T.R."/>
            <person name="McDonald L.A."/>
            <person name="Feldblyum T.V."/>
            <person name="Smith H.O."/>
            <person name="Venter J.C."/>
            <person name="Nealson K.H."/>
            <person name="Fraser C.M."/>
        </authorList>
    </citation>
    <scope>NUCLEOTIDE SEQUENCE [LARGE SCALE GENOMIC DNA]</scope>
    <source>
        <strain>ATCC 700550 / JCM 31522 / CIP 106686 / LMG 19005 / NCIMB 14063 / MR-1</strain>
    </source>
</reference>
<feature type="chain" id="PRO_0000137041" description="Nucleoside diphosphate kinase">
    <location>
        <begin position="1"/>
        <end position="143"/>
    </location>
</feature>
<feature type="active site" description="Pros-phosphohistidine intermediate" evidence="1">
    <location>
        <position position="117"/>
    </location>
</feature>
<feature type="binding site" evidence="1">
    <location>
        <position position="11"/>
    </location>
    <ligand>
        <name>ATP</name>
        <dbReference type="ChEBI" id="CHEBI:30616"/>
    </ligand>
</feature>
<feature type="binding site" evidence="1">
    <location>
        <position position="59"/>
    </location>
    <ligand>
        <name>ATP</name>
        <dbReference type="ChEBI" id="CHEBI:30616"/>
    </ligand>
</feature>
<feature type="binding site" evidence="1">
    <location>
        <position position="87"/>
    </location>
    <ligand>
        <name>ATP</name>
        <dbReference type="ChEBI" id="CHEBI:30616"/>
    </ligand>
</feature>
<feature type="binding site" evidence="1">
    <location>
        <position position="93"/>
    </location>
    <ligand>
        <name>ATP</name>
        <dbReference type="ChEBI" id="CHEBI:30616"/>
    </ligand>
</feature>
<feature type="binding site" evidence="1">
    <location>
        <position position="104"/>
    </location>
    <ligand>
        <name>ATP</name>
        <dbReference type="ChEBI" id="CHEBI:30616"/>
    </ligand>
</feature>
<feature type="binding site" evidence="1">
    <location>
        <position position="114"/>
    </location>
    <ligand>
        <name>ATP</name>
        <dbReference type="ChEBI" id="CHEBI:30616"/>
    </ligand>
</feature>
<dbReference type="EC" id="2.7.4.6" evidence="1"/>
<dbReference type="EMBL" id="AE014299">
    <property type="protein sequence ID" value="AAN55314.1"/>
    <property type="molecule type" value="Genomic_DNA"/>
</dbReference>
<dbReference type="RefSeq" id="NP_717870.1">
    <property type="nucleotide sequence ID" value="NC_004347.2"/>
</dbReference>
<dbReference type="RefSeq" id="WP_011072285.1">
    <property type="nucleotide sequence ID" value="NZ_CP053946.1"/>
</dbReference>
<dbReference type="SMR" id="Q8EEU0"/>
<dbReference type="STRING" id="211586.SO_2274"/>
<dbReference type="PaxDb" id="211586-SO_2274"/>
<dbReference type="GeneID" id="75188966"/>
<dbReference type="KEGG" id="son:SO_2274"/>
<dbReference type="PATRIC" id="fig|211586.12.peg.2190"/>
<dbReference type="eggNOG" id="COG0105">
    <property type="taxonomic scope" value="Bacteria"/>
</dbReference>
<dbReference type="HOGENOM" id="CLU_060216_8_1_6"/>
<dbReference type="OrthoDB" id="9801161at2"/>
<dbReference type="PhylomeDB" id="Q8EEU0"/>
<dbReference type="BioCyc" id="SONE211586:G1GMP-2078-MONOMER"/>
<dbReference type="Proteomes" id="UP000008186">
    <property type="component" value="Chromosome"/>
</dbReference>
<dbReference type="GO" id="GO:0005737">
    <property type="term" value="C:cytoplasm"/>
    <property type="evidence" value="ECO:0007669"/>
    <property type="project" value="UniProtKB-SubCell"/>
</dbReference>
<dbReference type="GO" id="GO:0005524">
    <property type="term" value="F:ATP binding"/>
    <property type="evidence" value="ECO:0007669"/>
    <property type="project" value="UniProtKB-UniRule"/>
</dbReference>
<dbReference type="GO" id="GO:0046872">
    <property type="term" value="F:metal ion binding"/>
    <property type="evidence" value="ECO:0007669"/>
    <property type="project" value="UniProtKB-KW"/>
</dbReference>
<dbReference type="GO" id="GO:0004550">
    <property type="term" value="F:nucleoside diphosphate kinase activity"/>
    <property type="evidence" value="ECO:0007669"/>
    <property type="project" value="UniProtKB-UniRule"/>
</dbReference>
<dbReference type="GO" id="GO:0006241">
    <property type="term" value="P:CTP biosynthetic process"/>
    <property type="evidence" value="ECO:0007669"/>
    <property type="project" value="UniProtKB-UniRule"/>
</dbReference>
<dbReference type="GO" id="GO:0006183">
    <property type="term" value="P:GTP biosynthetic process"/>
    <property type="evidence" value="ECO:0007669"/>
    <property type="project" value="UniProtKB-UniRule"/>
</dbReference>
<dbReference type="GO" id="GO:0006163">
    <property type="term" value="P:purine nucleotide metabolic process"/>
    <property type="evidence" value="ECO:0000318"/>
    <property type="project" value="GO_Central"/>
</dbReference>
<dbReference type="GO" id="GO:0006220">
    <property type="term" value="P:pyrimidine nucleotide metabolic process"/>
    <property type="evidence" value="ECO:0000318"/>
    <property type="project" value="GO_Central"/>
</dbReference>
<dbReference type="GO" id="GO:0006228">
    <property type="term" value="P:UTP biosynthetic process"/>
    <property type="evidence" value="ECO:0007669"/>
    <property type="project" value="UniProtKB-UniRule"/>
</dbReference>
<dbReference type="CDD" id="cd04413">
    <property type="entry name" value="NDPk_I"/>
    <property type="match status" value="1"/>
</dbReference>
<dbReference type="FunFam" id="3.30.70.141:FF:000001">
    <property type="entry name" value="Nucleoside diphosphate kinase"/>
    <property type="match status" value="1"/>
</dbReference>
<dbReference type="Gene3D" id="3.30.70.141">
    <property type="entry name" value="Nucleoside diphosphate kinase-like domain"/>
    <property type="match status" value="1"/>
</dbReference>
<dbReference type="HAMAP" id="MF_00451">
    <property type="entry name" value="NDP_kinase"/>
    <property type="match status" value="1"/>
</dbReference>
<dbReference type="InterPro" id="IPR034907">
    <property type="entry name" value="NDK-like_dom"/>
</dbReference>
<dbReference type="InterPro" id="IPR036850">
    <property type="entry name" value="NDK-like_dom_sf"/>
</dbReference>
<dbReference type="InterPro" id="IPR001564">
    <property type="entry name" value="Nucleoside_diP_kinase"/>
</dbReference>
<dbReference type="InterPro" id="IPR023005">
    <property type="entry name" value="Nucleoside_diP_kinase_AS"/>
</dbReference>
<dbReference type="NCBIfam" id="NF001908">
    <property type="entry name" value="PRK00668.1"/>
    <property type="match status" value="1"/>
</dbReference>
<dbReference type="PANTHER" id="PTHR46161">
    <property type="entry name" value="NUCLEOSIDE DIPHOSPHATE KINASE"/>
    <property type="match status" value="1"/>
</dbReference>
<dbReference type="PANTHER" id="PTHR46161:SF3">
    <property type="entry name" value="NUCLEOSIDE DIPHOSPHATE KINASE DDB_G0292928-RELATED"/>
    <property type="match status" value="1"/>
</dbReference>
<dbReference type="Pfam" id="PF00334">
    <property type="entry name" value="NDK"/>
    <property type="match status" value="1"/>
</dbReference>
<dbReference type="PRINTS" id="PR01243">
    <property type="entry name" value="NUCDPKINASE"/>
</dbReference>
<dbReference type="SMART" id="SM00562">
    <property type="entry name" value="NDK"/>
    <property type="match status" value="1"/>
</dbReference>
<dbReference type="SUPFAM" id="SSF54919">
    <property type="entry name" value="Nucleoside diphosphate kinase, NDK"/>
    <property type="match status" value="1"/>
</dbReference>
<dbReference type="PROSITE" id="PS00469">
    <property type="entry name" value="NDPK"/>
    <property type="match status" value="1"/>
</dbReference>
<dbReference type="PROSITE" id="PS51374">
    <property type="entry name" value="NDPK_LIKE"/>
    <property type="match status" value="1"/>
</dbReference>
<comment type="function">
    <text evidence="1">Major role in the synthesis of nucleoside triphosphates other than ATP. The ATP gamma phosphate is transferred to the NDP beta phosphate via a ping-pong mechanism, using a phosphorylated active-site intermediate.</text>
</comment>
<comment type="catalytic activity">
    <reaction evidence="1">
        <text>a 2'-deoxyribonucleoside 5'-diphosphate + ATP = a 2'-deoxyribonucleoside 5'-triphosphate + ADP</text>
        <dbReference type="Rhea" id="RHEA:44640"/>
        <dbReference type="ChEBI" id="CHEBI:30616"/>
        <dbReference type="ChEBI" id="CHEBI:61560"/>
        <dbReference type="ChEBI" id="CHEBI:73316"/>
        <dbReference type="ChEBI" id="CHEBI:456216"/>
        <dbReference type="EC" id="2.7.4.6"/>
    </reaction>
</comment>
<comment type="catalytic activity">
    <reaction evidence="1">
        <text>a ribonucleoside 5'-diphosphate + ATP = a ribonucleoside 5'-triphosphate + ADP</text>
        <dbReference type="Rhea" id="RHEA:18113"/>
        <dbReference type="ChEBI" id="CHEBI:30616"/>
        <dbReference type="ChEBI" id="CHEBI:57930"/>
        <dbReference type="ChEBI" id="CHEBI:61557"/>
        <dbReference type="ChEBI" id="CHEBI:456216"/>
        <dbReference type="EC" id="2.7.4.6"/>
    </reaction>
</comment>
<comment type="cofactor">
    <cofactor evidence="1">
        <name>Mg(2+)</name>
        <dbReference type="ChEBI" id="CHEBI:18420"/>
    </cofactor>
</comment>
<comment type="subunit">
    <text evidence="1">Homotetramer.</text>
</comment>
<comment type="subcellular location">
    <subcellularLocation>
        <location evidence="1">Cytoplasm</location>
    </subcellularLocation>
</comment>
<comment type="similarity">
    <text evidence="1">Belongs to the NDK family.</text>
</comment>